<proteinExistence type="evidence at protein level"/>
<evidence type="ECO:0000255" key="1">
    <source>
        <dbReference type="HAMAP-Rule" id="MF_01691"/>
    </source>
</evidence>
<evidence type="ECO:0007829" key="2">
    <source>
        <dbReference type="PDB" id="3BV8"/>
    </source>
</evidence>
<name>DAPH_STAAM</name>
<reference key="1">
    <citation type="journal article" date="2001" name="Lancet">
        <title>Whole genome sequencing of meticillin-resistant Staphylococcus aureus.</title>
        <authorList>
            <person name="Kuroda M."/>
            <person name="Ohta T."/>
            <person name="Uchiyama I."/>
            <person name="Baba T."/>
            <person name="Yuzawa H."/>
            <person name="Kobayashi I."/>
            <person name="Cui L."/>
            <person name="Oguchi A."/>
            <person name="Aoki K."/>
            <person name="Nagai Y."/>
            <person name="Lian J.-Q."/>
            <person name="Ito T."/>
            <person name="Kanamori M."/>
            <person name="Matsumaru H."/>
            <person name="Maruyama A."/>
            <person name="Murakami H."/>
            <person name="Hosoyama A."/>
            <person name="Mizutani-Ui Y."/>
            <person name="Takahashi N.K."/>
            <person name="Sawano T."/>
            <person name="Inoue R."/>
            <person name="Kaito C."/>
            <person name="Sekimizu K."/>
            <person name="Hirakawa H."/>
            <person name="Kuhara S."/>
            <person name="Goto S."/>
            <person name="Yabuzaki J."/>
            <person name="Kanehisa M."/>
            <person name="Yamashita A."/>
            <person name="Oshima K."/>
            <person name="Furuya K."/>
            <person name="Yoshino C."/>
            <person name="Shiba T."/>
            <person name="Hattori M."/>
            <person name="Ogasawara N."/>
            <person name="Hayashi H."/>
            <person name="Hiramatsu K."/>
        </authorList>
    </citation>
    <scope>NUCLEOTIDE SEQUENCE [LARGE SCALE GENOMIC DNA]</scope>
    <source>
        <strain>Mu50 / ATCC 700699</strain>
    </source>
</reference>
<gene>
    <name evidence="1" type="primary">dapH</name>
    <name type="ordered locus">SAV1397</name>
</gene>
<accession>Q7A2S0</accession>
<feature type="chain" id="PRO_0000376694" description="2,3,4,5-tetrahydropyridine-2,6-dicarboxylate N-acetyltransferase">
    <location>
        <begin position="1"/>
        <end position="239"/>
    </location>
</feature>
<feature type="helix" evidence="2">
    <location>
        <begin position="7"/>
        <end position="17"/>
    </location>
</feature>
<feature type="strand" evidence="2">
    <location>
        <begin position="22"/>
        <end position="29"/>
    </location>
</feature>
<feature type="strand" evidence="2">
    <location>
        <begin position="41"/>
        <end position="45"/>
    </location>
</feature>
<feature type="strand" evidence="2">
    <location>
        <begin position="48"/>
        <end position="54"/>
    </location>
</feature>
<feature type="helix" evidence="2">
    <location>
        <begin position="55"/>
        <end position="65"/>
    </location>
</feature>
<feature type="helix" evidence="2">
    <location>
        <begin position="66"/>
        <end position="68"/>
    </location>
</feature>
<feature type="strand" evidence="2">
    <location>
        <begin position="69"/>
        <end position="76"/>
    </location>
</feature>
<feature type="helix" evidence="2">
    <location>
        <begin position="78"/>
        <end position="81"/>
    </location>
</feature>
<keyword id="KW-0002">3D-structure</keyword>
<keyword id="KW-0012">Acyltransferase</keyword>
<keyword id="KW-0028">Amino-acid biosynthesis</keyword>
<keyword id="KW-0220">Diaminopimelate biosynthesis</keyword>
<keyword id="KW-0457">Lysine biosynthesis</keyword>
<keyword id="KW-0677">Repeat</keyword>
<keyword id="KW-0808">Transferase</keyword>
<sequence length="239" mass="25258">MVQHLTAEEIIQYISDAKKSTPIKVYLNGNFEGITYPESFKVFGSEQSKVIFCEADDWKPFYEAYGSQFEDIEIEMDRRNSAIPLKDLTNTNARIEPGAFIREQAIIEDGAVVMMGATINIGAVVGEGTMIDMNATLGGRATTGKNVHVGAGAVLAGVIEPPSASPVIIEDDVLIGANAVILEGVRVGKGAIVAAGAIVTQDVPAGAVVAGTPAKVIKQASEVQDTKKEIVAALRKLND</sequence>
<dbReference type="EC" id="2.3.1.89" evidence="1"/>
<dbReference type="EMBL" id="BA000017">
    <property type="protein sequence ID" value="BAB57559.1"/>
    <property type="molecule type" value="Genomic_DNA"/>
</dbReference>
<dbReference type="PDB" id="3BV8">
    <property type="method" value="X-ray"/>
    <property type="resolution" value="1.75 A"/>
    <property type="chains" value="A=5-88"/>
</dbReference>
<dbReference type="PDBsum" id="3BV8"/>
<dbReference type="SMR" id="Q7A2S0"/>
<dbReference type="KEGG" id="sav:SAV1397"/>
<dbReference type="HOGENOM" id="CLU_103751_0_0_9"/>
<dbReference type="PhylomeDB" id="Q7A2S0"/>
<dbReference type="UniPathway" id="UPA00034">
    <property type="reaction ID" value="UER00022"/>
</dbReference>
<dbReference type="EvolutionaryTrace" id="Q7A2S0"/>
<dbReference type="Proteomes" id="UP000002481">
    <property type="component" value="Chromosome"/>
</dbReference>
<dbReference type="GO" id="GO:0047200">
    <property type="term" value="F:tetrahydrodipicolinate N-acetyltransferase activity"/>
    <property type="evidence" value="ECO:0007669"/>
    <property type="project" value="UniProtKB-EC"/>
</dbReference>
<dbReference type="GO" id="GO:0019877">
    <property type="term" value="P:diaminopimelate biosynthetic process"/>
    <property type="evidence" value="ECO:0007669"/>
    <property type="project" value="UniProtKB-UniRule"/>
</dbReference>
<dbReference type="GO" id="GO:0009089">
    <property type="term" value="P:lysine biosynthetic process via diaminopimelate"/>
    <property type="evidence" value="ECO:0007669"/>
    <property type="project" value="UniProtKB-UniRule"/>
</dbReference>
<dbReference type="CDD" id="cd03350">
    <property type="entry name" value="LbH_THP_succinylT"/>
    <property type="match status" value="1"/>
</dbReference>
<dbReference type="Gene3D" id="2.160.10.10">
    <property type="entry name" value="Hexapeptide repeat proteins"/>
    <property type="match status" value="1"/>
</dbReference>
<dbReference type="Gene3D" id="3.30.70.250">
    <property type="entry name" value="Malonyl-CoA ACP transacylase, ACP-binding"/>
    <property type="match status" value="1"/>
</dbReference>
<dbReference type="HAMAP" id="MF_01691">
    <property type="entry name" value="DapH"/>
    <property type="match status" value="1"/>
</dbReference>
<dbReference type="InterPro" id="IPR019873">
    <property type="entry name" value="DapH"/>
</dbReference>
<dbReference type="InterPro" id="IPR013710">
    <property type="entry name" value="DapH_N"/>
</dbReference>
<dbReference type="InterPro" id="IPR001451">
    <property type="entry name" value="Hexapep"/>
</dbReference>
<dbReference type="InterPro" id="IPR018357">
    <property type="entry name" value="Hexapep_transf_CS"/>
</dbReference>
<dbReference type="InterPro" id="IPR050179">
    <property type="entry name" value="Trans_hexapeptide_repeat"/>
</dbReference>
<dbReference type="InterPro" id="IPR011004">
    <property type="entry name" value="Trimer_LpxA-like_sf"/>
</dbReference>
<dbReference type="NCBIfam" id="TIGR03532">
    <property type="entry name" value="DapD_Ac"/>
    <property type="match status" value="1"/>
</dbReference>
<dbReference type="PANTHER" id="PTHR43300:SF10">
    <property type="entry name" value="2,3,4,5-TETRAHYDROPYRIDINE-2,6-DICARBOXYLATE N-ACETYLTRANSFERASE"/>
    <property type="match status" value="1"/>
</dbReference>
<dbReference type="PANTHER" id="PTHR43300">
    <property type="entry name" value="ACETYLTRANSFERASE"/>
    <property type="match status" value="1"/>
</dbReference>
<dbReference type="Pfam" id="PF08503">
    <property type="entry name" value="DapH_N"/>
    <property type="match status" value="1"/>
</dbReference>
<dbReference type="Pfam" id="PF00132">
    <property type="entry name" value="Hexapep"/>
    <property type="match status" value="1"/>
</dbReference>
<dbReference type="Pfam" id="PF14602">
    <property type="entry name" value="Hexapep_2"/>
    <property type="match status" value="1"/>
</dbReference>
<dbReference type="SUPFAM" id="SSF51161">
    <property type="entry name" value="Trimeric LpxA-like enzymes"/>
    <property type="match status" value="1"/>
</dbReference>
<dbReference type="PROSITE" id="PS00101">
    <property type="entry name" value="HEXAPEP_TRANSFERASES"/>
    <property type="match status" value="1"/>
</dbReference>
<organism>
    <name type="scientific">Staphylococcus aureus (strain Mu50 / ATCC 700699)</name>
    <dbReference type="NCBI Taxonomy" id="158878"/>
    <lineage>
        <taxon>Bacteria</taxon>
        <taxon>Bacillati</taxon>
        <taxon>Bacillota</taxon>
        <taxon>Bacilli</taxon>
        <taxon>Bacillales</taxon>
        <taxon>Staphylococcaceae</taxon>
        <taxon>Staphylococcus</taxon>
    </lineage>
</organism>
<protein>
    <recommendedName>
        <fullName evidence="1">2,3,4,5-tetrahydropyridine-2,6-dicarboxylate N-acetyltransferase</fullName>
        <ecNumber evidence="1">2.3.1.89</ecNumber>
    </recommendedName>
    <alternativeName>
        <fullName evidence="1">Tetrahydrodipicolinate N-acetyltransferase</fullName>
        <shortName evidence="1">THP acetyltransferase</shortName>
        <shortName evidence="1">Tetrahydropicolinate acetylase</shortName>
    </alternativeName>
</protein>
<comment type="function">
    <text evidence="1">Catalyzes the transfer of an acetyl group from acetyl-CoA to tetrahydrodipicolinate.</text>
</comment>
<comment type="catalytic activity">
    <reaction evidence="1">
        <text>(S)-2,3,4,5-tetrahydrodipicolinate + acetyl-CoA + H2O = L-2-acetamido-6-oxoheptanedioate + CoA</text>
        <dbReference type="Rhea" id="RHEA:13085"/>
        <dbReference type="ChEBI" id="CHEBI:15377"/>
        <dbReference type="ChEBI" id="CHEBI:16845"/>
        <dbReference type="ChEBI" id="CHEBI:57287"/>
        <dbReference type="ChEBI" id="CHEBI:57288"/>
        <dbReference type="ChEBI" id="CHEBI:58117"/>
        <dbReference type="EC" id="2.3.1.89"/>
    </reaction>
</comment>
<comment type="pathway">
    <text evidence="1">Amino-acid biosynthesis; L-lysine biosynthesis via DAP pathway; LL-2,6-diaminopimelate from (S)-tetrahydrodipicolinate (acetylase route): step 1/3.</text>
</comment>
<comment type="similarity">
    <text evidence="1">Belongs to the transferase hexapeptide repeat family. DapH subfamily.</text>
</comment>